<feature type="transit peptide" description="Chloroplast" evidence="1">
    <location>
        <begin position="1"/>
        <end position="65"/>
    </location>
</feature>
<feature type="chain" id="PRO_0000355994" description="GTP-binding protein At3g49725, chloroplastic">
    <location>
        <begin position="66"/>
        <end position="620"/>
    </location>
</feature>
<feature type="domain" description="Hflx-type G" evidence="2">
    <location>
        <begin position="346"/>
        <end position="585"/>
    </location>
</feature>
<feature type="region of interest" description="Disordered" evidence="3">
    <location>
        <begin position="57"/>
        <end position="100"/>
    </location>
</feature>
<feature type="region of interest" description="Disordered" evidence="3">
    <location>
        <begin position="478"/>
        <end position="521"/>
    </location>
</feature>
<feature type="region of interest" description="Disordered" evidence="3">
    <location>
        <begin position="597"/>
        <end position="620"/>
    </location>
</feature>
<feature type="compositionally biased region" description="Acidic residues" evidence="3">
    <location>
        <begin position="478"/>
        <end position="497"/>
    </location>
</feature>
<feature type="compositionally biased region" description="Acidic residues" evidence="3">
    <location>
        <begin position="511"/>
        <end position="521"/>
    </location>
</feature>
<feature type="binding site" evidence="2">
    <location>
        <begin position="352"/>
        <end position="359"/>
    </location>
    <ligand>
        <name>GTP</name>
        <dbReference type="ChEBI" id="CHEBI:37565"/>
    </ligand>
</feature>
<feature type="binding site" evidence="2">
    <location>
        <position position="359"/>
    </location>
    <ligand>
        <name>Mg(2+)</name>
        <dbReference type="ChEBI" id="CHEBI:18420"/>
    </ligand>
</feature>
<feature type="binding site" evidence="2">
    <location>
        <begin position="377"/>
        <end position="381"/>
    </location>
    <ligand>
        <name>GTP</name>
        <dbReference type="ChEBI" id="CHEBI:37565"/>
    </ligand>
</feature>
<feature type="binding site" evidence="2">
    <location>
        <position position="379"/>
    </location>
    <ligand>
        <name>Mg(2+)</name>
        <dbReference type="ChEBI" id="CHEBI:18420"/>
    </ligand>
</feature>
<feature type="binding site" evidence="2">
    <location>
        <begin position="399"/>
        <end position="402"/>
    </location>
    <ligand>
        <name>GTP</name>
        <dbReference type="ChEBI" id="CHEBI:37565"/>
    </ligand>
</feature>
<feature type="binding site" evidence="2">
    <location>
        <begin position="468"/>
        <end position="471"/>
    </location>
    <ligand>
        <name>GTP</name>
        <dbReference type="ChEBI" id="CHEBI:37565"/>
    </ligand>
</feature>
<feature type="binding site" evidence="2">
    <location>
        <begin position="563"/>
        <end position="565"/>
    </location>
    <ligand>
        <name>GTP</name>
        <dbReference type="ChEBI" id="CHEBI:37565"/>
    </ligand>
</feature>
<feature type="sequence conflict" description="In Ref. 3; BAE99634." evidence="4" ref="3">
    <original>T</original>
    <variation>A</variation>
    <location>
        <position position="368"/>
    </location>
</feature>
<feature type="sequence conflict" description="In Ref. 3; BAE99634." evidence="4" ref="3">
    <original>E</original>
    <variation>G</variation>
    <location>
        <position position="540"/>
    </location>
</feature>
<keyword id="KW-0150">Chloroplast</keyword>
<keyword id="KW-0342">GTP-binding</keyword>
<keyword id="KW-0460">Magnesium</keyword>
<keyword id="KW-0479">Metal-binding</keyword>
<keyword id="KW-0547">Nucleotide-binding</keyword>
<keyword id="KW-0934">Plastid</keyword>
<keyword id="KW-1185">Reference proteome</keyword>
<keyword id="KW-0809">Transit peptide</keyword>
<organism>
    <name type="scientific">Arabidopsis thaliana</name>
    <name type="common">Mouse-ear cress</name>
    <dbReference type="NCBI Taxonomy" id="3702"/>
    <lineage>
        <taxon>Eukaryota</taxon>
        <taxon>Viridiplantae</taxon>
        <taxon>Streptophyta</taxon>
        <taxon>Embryophyta</taxon>
        <taxon>Tracheophyta</taxon>
        <taxon>Spermatophyta</taxon>
        <taxon>Magnoliopsida</taxon>
        <taxon>eudicotyledons</taxon>
        <taxon>Gunneridae</taxon>
        <taxon>Pentapetalae</taxon>
        <taxon>rosids</taxon>
        <taxon>malvids</taxon>
        <taxon>Brassicales</taxon>
        <taxon>Brassicaceae</taxon>
        <taxon>Camelineae</taxon>
        <taxon>Arabidopsis</taxon>
    </lineage>
</organism>
<name>Y3725_ARATH</name>
<evidence type="ECO:0000255" key="1"/>
<evidence type="ECO:0000255" key="2">
    <source>
        <dbReference type="PROSITE-ProRule" id="PRU01042"/>
    </source>
</evidence>
<evidence type="ECO:0000256" key="3">
    <source>
        <dbReference type="SAM" id="MobiDB-lite"/>
    </source>
</evidence>
<evidence type="ECO:0000305" key="4"/>
<reference key="1">
    <citation type="journal article" date="2000" name="Nature">
        <title>Sequence and analysis of chromosome 3 of the plant Arabidopsis thaliana.</title>
        <authorList>
            <person name="Salanoubat M."/>
            <person name="Lemcke K."/>
            <person name="Rieger M."/>
            <person name="Ansorge W."/>
            <person name="Unseld M."/>
            <person name="Fartmann B."/>
            <person name="Valle G."/>
            <person name="Bloecker H."/>
            <person name="Perez-Alonso M."/>
            <person name="Obermaier B."/>
            <person name="Delseny M."/>
            <person name="Boutry M."/>
            <person name="Grivell L.A."/>
            <person name="Mache R."/>
            <person name="Puigdomenech P."/>
            <person name="De Simone V."/>
            <person name="Choisne N."/>
            <person name="Artiguenave F."/>
            <person name="Robert C."/>
            <person name="Brottier P."/>
            <person name="Wincker P."/>
            <person name="Cattolico L."/>
            <person name="Weissenbach J."/>
            <person name="Saurin W."/>
            <person name="Quetier F."/>
            <person name="Schaefer M."/>
            <person name="Mueller-Auer S."/>
            <person name="Gabel C."/>
            <person name="Fuchs M."/>
            <person name="Benes V."/>
            <person name="Wurmbach E."/>
            <person name="Drzonek H."/>
            <person name="Erfle H."/>
            <person name="Jordan N."/>
            <person name="Bangert S."/>
            <person name="Wiedelmann R."/>
            <person name="Kranz H."/>
            <person name="Voss H."/>
            <person name="Holland R."/>
            <person name="Brandt P."/>
            <person name="Nyakatura G."/>
            <person name="Vezzi A."/>
            <person name="D'Angelo M."/>
            <person name="Pallavicini A."/>
            <person name="Toppo S."/>
            <person name="Simionati B."/>
            <person name="Conrad A."/>
            <person name="Hornischer K."/>
            <person name="Kauer G."/>
            <person name="Loehnert T.-H."/>
            <person name="Nordsiek G."/>
            <person name="Reichelt J."/>
            <person name="Scharfe M."/>
            <person name="Schoen O."/>
            <person name="Bargues M."/>
            <person name="Terol J."/>
            <person name="Climent J."/>
            <person name="Navarro P."/>
            <person name="Collado C."/>
            <person name="Perez-Perez A."/>
            <person name="Ottenwaelder B."/>
            <person name="Duchemin D."/>
            <person name="Cooke R."/>
            <person name="Laudie M."/>
            <person name="Berger-Llauro C."/>
            <person name="Purnelle B."/>
            <person name="Masuy D."/>
            <person name="de Haan M."/>
            <person name="Maarse A.C."/>
            <person name="Alcaraz J.-P."/>
            <person name="Cottet A."/>
            <person name="Casacuberta E."/>
            <person name="Monfort A."/>
            <person name="Argiriou A."/>
            <person name="Flores M."/>
            <person name="Liguori R."/>
            <person name="Vitale D."/>
            <person name="Mannhaupt G."/>
            <person name="Haase D."/>
            <person name="Schoof H."/>
            <person name="Rudd S."/>
            <person name="Zaccaria P."/>
            <person name="Mewes H.-W."/>
            <person name="Mayer K.F.X."/>
            <person name="Kaul S."/>
            <person name="Town C.D."/>
            <person name="Koo H.L."/>
            <person name="Tallon L.J."/>
            <person name="Jenkins J."/>
            <person name="Rooney T."/>
            <person name="Rizzo M."/>
            <person name="Walts A."/>
            <person name="Utterback T."/>
            <person name="Fujii C.Y."/>
            <person name="Shea T.P."/>
            <person name="Creasy T.H."/>
            <person name="Haas B."/>
            <person name="Maiti R."/>
            <person name="Wu D."/>
            <person name="Peterson J."/>
            <person name="Van Aken S."/>
            <person name="Pai G."/>
            <person name="Militscher J."/>
            <person name="Sellers P."/>
            <person name="Gill J.E."/>
            <person name="Feldblyum T.V."/>
            <person name="Preuss D."/>
            <person name="Lin X."/>
            <person name="Nierman W.C."/>
            <person name="Salzberg S.L."/>
            <person name="White O."/>
            <person name="Venter J.C."/>
            <person name="Fraser C.M."/>
            <person name="Kaneko T."/>
            <person name="Nakamura Y."/>
            <person name="Sato S."/>
            <person name="Kato T."/>
            <person name="Asamizu E."/>
            <person name="Sasamoto S."/>
            <person name="Kimura T."/>
            <person name="Idesawa K."/>
            <person name="Kawashima K."/>
            <person name="Kishida Y."/>
            <person name="Kiyokawa C."/>
            <person name="Kohara M."/>
            <person name="Matsumoto M."/>
            <person name="Matsuno A."/>
            <person name="Muraki A."/>
            <person name="Nakayama S."/>
            <person name="Nakazaki N."/>
            <person name="Shinpo S."/>
            <person name="Takeuchi C."/>
            <person name="Wada T."/>
            <person name="Watanabe A."/>
            <person name="Yamada M."/>
            <person name="Yasuda M."/>
            <person name="Tabata S."/>
        </authorList>
    </citation>
    <scope>NUCLEOTIDE SEQUENCE [LARGE SCALE GENOMIC DNA]</scope>
    <source>
        <strain>cv. Columbia</strain>
    </source>
</reference>
<reference key="2">
    <citation type="journal article" date="2017" name="Plant J.">
        <title>Araport11: a complete reannotation of the Arabidopsis thaliana reference genome.</title>
        <authorList>
            <person name="Cheng C.Y."/>
            <person name="Krishnakumar V."/>
            <person name="Chan A.P."/>
            <person name="Thibaud-Nissen F."/>
            <person name="Schobel S."/>
            <person name="Town C.D."/>
        </authorList>
    </citation>
    <scope>GENOME REANNOTATION</scope>
    <source>
        <strain>cv. Columbia</strain>
    </source>
</reference>
<reference key="3">
    <citation type="submission" date="2006-07" db="EMBL/GenBank/DDBJ databases">
        <title>Large-scale analysis of RIKEN Arabidopsis full-length (RAFL) cDNAs.</title>
        <authorList>
            <person name="Totoki Y."/>
            <person name="Seki M."/>
            <person name="Ishida J."/>
            <person name="Nakajima M."/>
            <person name="Enju A."/>
            <person name="Kamiya A."/>
            <person name="Narusaka M."/>
            <person name="Shin-i T."/>
            <person name="Nakagawa M."/>
            <person name="Sakamoto N."/>
            <person name="Oishi K."/>
            <person name="Kohara Y."/>
            <person name="Kobayashi M."/>
            <person name="Toyoda A."/>
            <person name="Sakaki Y."/>
            <person name="Sakurai T."/>
            <person name="Iida K."/>
            <person name="Akiyama K."/>
            <person name="Satou M."/>
            <person name="Toyoda T."/>
            <person name="Konagaya A."/>
            <person name="Carninci P."/>
            <person name="Kawai J."/>
            <person name="Hayashizaki Y."/>
            <person name="Shinozaki K."/>
        </authorList>
    </citation>
    <scope>NUCLEOTIDE SEQUENCE [LARGE SCALE MRNA]</scope>
    <source>
        <strain>cv. Columbia</strain>
    </source>
</reference>
<dbReference type="EMBL" id="AL132965">
    <property type="protein sequence ID" value="CAB66911.1"/>
    <property type="status" value="ALT_SEQ"/>
    <property type="molecule type" value="Genomic_DNA"/>
</dbReference>
<dbReference type="EMBL" id="CP002686">
    <property type="protein sequence ID" value="AEE78582.1"/>
    <property type="molecule type" value="Genomic_DNA"/>
</dbReference>
<dbReference type="EMBL" id="AK227647">
    <property type="protein sequence ID" value="BAE99634.1"/>
    <property type="molecule type" value="mRNA"/>
</dbReference>
<dbReference type="PIR" id="T46039">
    <property type="entry name" value="T46039"/>
</dbReference>
<dbReference type="RefSeq" id="NP_001154669.1">
    <property type="nucleotide sequence ID" value="NM_001161197.2"/>
</dbReference>
<dbReference type="SMR" id="Q0WTB4"/>
<dbReference type="FunCoup" id="Q0WTB4">
    <property type="interactions" value="623"/>
</dbReference>
<dbReference type="STRING" id="3702.Q0WTB4"/>
<dbReference type="PaxDb" id="3702-AT3G49725.1"/>
<dbReference type="ProteomicsDB" id="228612"/>
<dbReference type="EnsemblPlants" id="AT3G49725.1">
    <property type="protein sequence ID" value="AT3G49725.1"/>
    <property type="gene ID" value="AT3G49725"/>
</dbReference>
<dbReference type="GeneID" id="7922380"/>
<dbReference type="Gramene" id="AT3G49725.1">
    <property type="protein sequence ID" value="AT3G49725.1"/>
    <property type="gene ID" value="AT3G49725"/>
</dbReference>
<dbReference type="KEGG" id="ath:AT3G49725"/>
<dbReference type="Araport" id="AT3G49725"/>
<dbReference type="TAIR" id="AT3G49725"/>
<dbReference type="eggNOG" id="KOG0410">
    <property type="taxonomic scope" value="Eukaryota"/>
</dbReference>
<dbReference type="eggNOG" id="KOG4197">
    <property type="taxonomic scope" value="Eukaryota"/>
</dbReference>
<dbReference type="HOGENOM" id="CLU_019597_6_0_1"/>
<dbReference type="InParanoid" id="Q0WTB4"/>
<dbReference type="OMA" id="TVKCHLN"/>
<dbReference type="PhylomeDB" id="Q0WTB4"/>
<dbReference type="PRO" id="PR:Q0WTB4"/>
<dbReference type="Proteomes" id="UP000006548">
    <property type="component" value="Chromosome 3"/>
</dbReference>
<dbReference type="ExpressionAtlas" id="Q0WTB4">
    <property type="expression patterns" value="baseline and differential"/>
</dbReference>
<dbReference type="GO" id="GO:0009507">
    <property type="term" value="C:chloroplast"/>
    <property type="evidence" value="ECO:0007669"/>
    <property type="project" value="UniProtKB-SubCell"/>
</dbReference>
<dbReference type="GO" id="GO:0005525">
    <property type="term" value="F:GTP binding"/>
    <property type="evidence" value="ECO:0007669"/>
    <property type="project" value="UniProtKB-KW"/>
</dbReference>
<dbReference type="GO" id="GO:0046872">
    <property type="term" value="F:metal ion binding"/>
    <property type="evidence" value="ECO:0007669"/>
    <property type="project" value="UniProtKB-KW"/>
</dbReference>
<dbReference type="CDD" id="cd01878">
    <property type="entry name" value="HflX"/>
    <property type="match status" value="1"/>
</dbReference>
<dbReference type="FunFam" id="3.40.50.11060:FF:000003">
    <property type="entry name" value="GTP-binding protein chloroplastic"/>
    <property type="match status" value="1"/>
</dbReference>
<dbReference type="FunFam" id="3.40.50.300:FF:001888">
    <property type="entry name" value="GTP-binding protein chloroplastic"/>
    <property type="match status" value="1"/>
</dbReference>
<dbReference type="Gene3D" id="3.40.50.11060">
    <property type="entry name" value="GTPase HflX, N-terminal domain"/>
    <property type="match status" value="1"/>
</dbReference>
<dbReference type="Gene3D" id="3.40.50.300">
    <property type="entry name" value="P-loop containing nucleotide triphosphate hydrolases"/>
    <property type="match status" value="1"/>
</dbReference>
<dbReference type="InterPro" id="IPR030394">
    <property type="entry name" value="G_HFLX_dom"/>
</dbReference>
<dbReference type="InterPro" id="IPR006073">
    <property type="entry name" value="GTP-bd"/>
</dbReference>
<dbReference type="InterPro" id="IPR032305">
    <property type="entry name" value="GTP-bd_M"/>
</dbReference>
<dbReference type="InterPro" id="IPR016496">
    <property type="entry name" value="GTPase_HflX"/>
</dbReference>
<dbReference type="InterPro" id="IPR025121">
    <property type="entry name" value="GTPase_HflX_N"/>
</dbReference>
<dbReference type="InterPro" id="IPR042108">
    <property type="entry name" value="GTPase_HflX_N_sf"/>
</dbReference>
<dbReference type="InterPro" id="IPR027417">
    <property type="entry name" value="P-loop_NTPase"/>
</dbReference>
<dbReference type="NCBIfam" id="TIGR03156">
    <property type="entry name" value="GTP_HflX"/>
    <property type="match status" value="1"/>
</dbReference>
<dbReference type="PANTHER" id="PTHR10229">
    <property type="entry name" value="GTP-BINDING PROTEIN HFLX"/>
    <property type="match status" value="1"/>
</dbReference>
<dbReference type="PANTHER" id="PTHR10229:SF8">
    <property type="entry name" value="GTPASE HFLX"/>
    <property type="match status" value="1"/>
</dbReference>
<dbReference type="Pfam" id="PF16360">
    <property type="entry name" value="GTP-bdg_M"/>
    <property type="match status" value="1"/>
</dbReference>
<dbReference type="Pfam" id="PF13167">
    <property type="entry name" value="GTP-bdg_N"/>
    <property type="match status" value="1"/>
</dbReference>
<dbReference type="Pfam" id="PF01926">
    <property type="entry name" value="MMR_HSR1"/>
    <property type="match status" value="1"/>
</dbReference>
<dbReference type="PRINTS" id="PR00326">
    <property type="entry name" value="GTP1OBG"/>
</dbReference>
<dbReference type="SUPFAM" id="SSF52540">
    <property type="entry name" value="P-loop containing nucleoside triphosphate hydrolases"/>
    <property type="match status" value="1"/>
</dbReference>
<dbReference type="PROSITE" id="PS51705">
    <property type="entry name" value="G_HFLX"/>
    <property type="match status" value="1"/>
</dbReference>
<gene>
    <name type="ordered locus">At3g49725</name>
    <name type="ORF">T16K5.80</name>
</gene>
<proteinExistence type="evidence at transcript level"/>
<protein>
    <recommendedName>
        <fullName>GTP-binding protein At3g49725, chloroplastic</fullName>
    </recommendedName>
</protein>
<comment type="cofactor">
    <cofactor evidence="2">
        <name>Mg(2+)</name>
        <dbReference type="ChEBI" id="CHEBI:18420"/>
    </cofactor>
</comment>
<comment type="subcellular location">
    <subcellularLocation>
        <location evidence="4">Plastid</location>
        <location evidence="4">Chloroplast</location>
    </subcellularLocation>
</comment>
<comment type="domain">
    <text>In contrast to other GTP-binding proteins, this family is characterized by a circular permutation of the GTPase motifs described by a G4-G1-G3 pattern.</text>
</comment>
<comment type="similarity">
    <text evidence="2">Belongs to the TRAFAC class OBG-HflX-like GTPase superfamily. HflX GTPase family.</text>
</comment>
<comment type="sequence caution" evidence="4">
    <conflict type="erroneous gene model prediction">
        <sequence resource="EMBL-CDS" id="CAB66911"/>
    </conflict>
    <text>The predicted gene has been split into 2 genes: At3g49725 and At3g49730.</text>
</comment>
<sequence>MSVTTSFGIWLNHINLDNQASFLYNNPHFCNRRFNRISMLRTVSLARNRLRSETPSSFLARDRLRSKTPSSSPFSSKRHTPKTSEIEEESTPKDSVLLNPKDPSSAPKLFLVQPRLAPPKYLQAKLNEALCLANSLEEQRYGYFESDFFDKELPSHVVVQNPVRRSSKPRVDTYFGSGTVDNIKCHLNAEDSKEEVDAVFVNAILTAIQQRNLERIWAKPVLDRVGLIIEIFNAHAHTKEAKLQAELAALMYNKSRLVRVRGTDGRHTFGQFGEAEVVSARGRAGSKGTGGGFVGGAGETELQLQRRRISDRRIRLLSQIKEAQRTRLLQRAGRKKRVGLEGESSGTIAVVGYTNAGKSTLISALTKTALYCNERLFATLDPTLKSAHLPSGNFVLLSDTVGFISDLPIQLVKAFQSTLEEVVEADLLLHVVDSTAPNIEEHRSTVLHVLNQIGVPEEKLQNMIEVWNKIDYEEDEVEEEKYLDDGEGVGEEDEDEADLKAEETVDASEATVDEDQIQNGDGDDADGWLLSEDENADDPEFWKVPEVAKVDAANKKGPDVRVSALTGVGLKELLYLIDDKMKEKKLKSPTIVERSELHKRKWRPPRNDDEEERLIPLDQR</sequence>
<accession>Q0WTB4</accession>
<accession>Q9M2Y5</accession>